<gene>
    <name type="primary">FAM221B</name>
    <name type="synonym">C9orf128</name>
</gene>
<dbReference type="EMBL" id="BX648702">
    <property type="status" value="NOT_ANNOTATED_CDS"/>
    <property type="molecule type" value="mRNA"/>
</dbReference>
<dbReference type="EMBL" id="AL133410">
    <property type="status" value="NOT_ANNOTATED_CDS"/>
    <property type="molecule type" value="Genomic_DNA"/>
</dbReference>
<dbReference type="EMBL" id="CH471071">
    <property type="protein sequence ID" value="EAW58330.1"/>
    <property type="molecule type" value="Genomic_DNA"/>
</dbReference>
<dbReference type="EMBL" id="BC146808">
    <property type="protein sequence ID" value="AAI46809.1"/>
    <property type="molecule type" value="mRNA"/>
</dbReference>
<dbReference type="EMBL" id="AI809547">
    <property type="status" value="NOT_ANNOTATED_CDS"/>
    <property type="molecule type" value="mRNA"/>
</dbReference>
<dbReference type="CCDS" id="CCDS43799.2">
    <molecule id="A6H8Z2-1"/>
</dbReference>
<dbReference type="RefSeq" id="NP_001012448.2">
    <molecule id="A6H8Z2-1"/>
    <property type="nucleotide sequence ID" value="NM_001012446.4"/>
</dbReference>
<dbReference type="RefSeq" id="XP_024303309.1">
    <molecule id="A6H8Z2-2"/>
    <property type="nucleotide sequence ID" value="XM_024447541.2"/>
</dbReference>
<dbReference type="RefSeq" id="XP_054218934.1">
    <molecule id="A6H8Z2-2"/>
    <property type="nucleotide sequence ID" value="XM_054362959.1"/>
</dbReference>
<dbReference type="BioGRID" id="134170">
    <property type="interactions" value="24"/>
</dbReference>
<dbReference type="FunCoup" id="A6H8Z2">
    <property type="interactions" value="14"/>
</dbReference>
<dbReference type="IntAct" id="A6H8Z2">
    <property type="interactions" value="25"/>
</dbReference>
<dbReference type="STRING" id="9606.ENSP00000415299"/>
<dbReference type="iPTMnet" id="A6H8Z2"/>
<dbReference type="PhosphoSitePlus" id="A6H8Z2"/>
<dbReference type="BioMuta" id="FAM221B"/>
<dbReference type="MassIVE" id="A6H8Z2"/>
<dbReference type="PaxDb" id="9606-ENSP00000415299"/>
<dbReference type="PeptideAtlas" id="A6H8Z2"/>
<dbReference type="ProteomicsDB" id="786">
    <molecule id="A6H8Z2-1"/>
</dbReference>
<dbReference type="ProteomicsDB" id="787">
    <molecule id="A6H8Z2-2"/>
</dbReference>
<dbReference type="ProteomicsDB" id="788">
    <molecule id="A6H8Z2-3"/>
</dbReference>
<dbReference type="Antibodypedia" id="5672">
    <property type="antibodies" value="38 antibodies from 10 providers"/>
</dbReference>
<dbReference type="DNASU" id="392307"/>
<dbReference type="Ensembl" id="ENST00000388950.8">
    <molecule id="A6H8Z2-3"/>
    <property type="protein sequence ID" value="ENSP00000373602.4"/>
    <property type="gene ID" value="ENSG00000204930.10"/>
</dbReference>
<dbReference type="Ensembl" id="ENST00000423537.7">
    <molecule id="A6H8Z2-1"/>
    <property type="protein sequence ID" value="ENSP00000415299.2"/>
    <property type="gene ID" value="ENSG00000204930.10"/>
</dbReference>
<dbReference type="GeneID" id="392307"/>
<dbReference type="KEGG" id="hsa:392307"/>
<dbReference type="MANE-Select" id="ENST00000423537.7">
    <property type="protein sequence ID" value="ENSP00000415299.2"/>
    <property type="RefSeq nucleotide sequence ID" value="NM_001012446.4"/>
    <property type="RefSeq protein sequence ID" value="NP_001012448.2"/>
</dbReference>
<dbReference type="UCSC" id="uc003zyj.3">
    <molecule id="A6H8Z2-1"/>
    <property type="organism name" value="human"/>
</dbReference>
<dbReference type="AGR" id="HGNC:30762"/>
<dbReference type="CTD" id="392307"/>
<dbReference type="GeneCards" id="FAM221B"/>
<dbReference type="HGNC" id="HGNC:30762">
    <property type="gene designation" value="FAM221B"/>
</dbReference>
<dbReference type="HPA" id="ENSG00000204930">
    <property type="expression patterns" value="Group enriched (bone marrow, testis)"/>
</dbReference>
<dbReference type="neXtProt" id="NX_A6H8Z2"/>
<dbReference type="OpenTargets" id="ENSG00000204930"/>
<dbReference type="PharmGKB" id="PA134925958"/>
<dbReference type="VEuPathDB" id="HostDB:ENSG00000204930"/>
<dbReference type="eggNOG" id="ENOG502R7X0">
    <property type="taxonomic scope" value="Eukaryota"/>
</dbReference>
<dbReference type="GeneTree" id="ENSGT00770000120611"/>
<dbReference type="HOGENOM" id="CLU_053868_0_0_1"/>
<dbReference type="InParanoid" id="A6H8Z2"/>
<dbReference type="OMA" id="CSCFESN"/>
<dbReference type="OrthoDB" id="196393at2759"/>
<dbReference type="PAN-GO" id="A6H8Z2">
    <property type="GO annotations" value="0 GO annotations based on evolutionary models"/>
</dbReference>
<dbReference type="PhylomeDB" id="A6H8Z2"/>
<dbReference type="TreeFam" id="TF328347"/>
<dbReference type="PathwayCommons" id="A6H8Z2"/>
<dbReference type="SignaLink" id="A6H8Z2"/>
<dbReference type="BioGRID-ORCS" id="392307">
    <property type="hits" value="11 hits in 1145 CRISPR screens"/>
</dbReference>
<dbReference type="GenomeRNAi" id="392307"/>
<dbReference type="Pharos" id="A6H8Z2">
    <property type="development level" value="Tdark"/>
</dbReference>
<dbReference type="PRO" id="PR:A6H8Z2"/>
<dbReference type="Proteomes" id="UP000005640">
    <property type="component" value="Chromosome 9"/>
</dbReference>
<dbReference type="RNAct" id="A6H8Z2">
    <property type="molecule type" value="protein"/>
</dbReference>
<dbReference type="Bgee" id="ENSG00000204930">
    <property type="expression patterns" value="Expressed in male germ line stem cell (sensu Vertebrata) in testis and 72 other cell types or tissues"/>
</dbReference>
<dbReference type="ExpressionAtlas" id="A6H8Z2">
    <property type="expression patterns" value="baseline and differential"/>
</dbReference>
<dbReference type="InterPro" id="IPR026755">
    <property type="entry name" value="Fam221a/b"/>
</dbReference>
<dbReference type="PANTHER" id="PTHR31214">
    <property type="entry name" value="PROTEIN FAM221A-RELATED"/>
    <property type="match status" value="1"/>
</dbReference>
<dbReference type="PANTHER" id="PTHR31214:SF3">
    <property type="entry name" value="PROTEIN FAM221B"/>
    <property type="match status" value="1"/>
</dbReference>
<dbReference type="Pfam" id="PF14753">
    <property type="entry name" value="FAM221"/>
    <property type="match status" value="1"/>
</dbReference>
<sequence length="402" mass="45394">MEAHEIIEEPHITMDAEKHPPSKDPSAEDLQENHISESFLKPSTSETPLEPHTSESPLVPSPSQIPLEAHSPETHQEPSISETPSETPTYEASLDSPISVVPEKHLTLPPQSRDYVCLSSSDTLKEDLSSESSSNEVPWTRRSTHLSESESLPEHCLSGPSSQVQVDTTEKQEEEAGEVEKGVDASDSTAHTAQPGHQLGNTARPVFPARQTELVEVAKAMHREEFGAQVNNLFQWEKDAALNAIQTGLYIGWRCPHYLWDCFRIGDESRCFCGHLLREHRIISDISVPCKVSQCRCFMFCFIPSRPEEVGEFWLKRRATFDPKAWRAQCRCKHSHEEHAATGPHPCRHHGCCCGCFESNFLCAACDRRWEEHETFFDTQKTRQRGGRPRGTDTVSNWHRPL</sequence>
<reference key="1">
    <citation type="journal article" date="2007" name="BMC Genomics">
        <title>The full-ORF clone resource of the German cDNA consortium.</title>
        <authorList>
            <person name="Bechtel S."/>
            <person name="Rosenfelder H."/>
            <person name="Duda A."/>
            <person name="Schmidt C.P."/>
            <person name="Ernst U."/>
            <person name="Wellenreuther R."/>
            <person name="Mehrle A."/>
            <person name="Schuster C."/>
            <person name="Bahr A."/>
            <person name="Bloecker H."/>
            <person name="Heubner D."/>
            <person name="Hoerlein A."/>
            <person name="Michel G."/>
            <person name="Wedler H."/>
            <person name="Koehrer K."/>
            <person name="Ottenwaelder B."/>
            <person name="Poustka A."/>
            <person name="Wiemann S."/>
            <person name="Schupp I."/>
        </authorList>
    </citation>
    <scope>NUCLEOTIDE SEQUENCE [LARGE SCALE MRNA] (ISOFORM 3)</scope>
    <source>
        <tissue>Brain</tissue>
    </source>
</reference>
<reference key="2">
    <citation type="journal article" date="2004" name="Nature">
        <title>DNA sequence and analysis of human chromosome 9.</title>
        <authorList>
            <person name="Humphray S.J."/>
            <person name="Oliver K."/>
            <person name="Hunt A.R."/>
            <person name="Plumb R.W."/>
            <person name="Loveland J.E."/>
            <person name="Howe K.L."/>
            <person name="Andrews T.D."/>
            <person name="Searle S."/>
            <person name="Hunt S.E."/>
            <person name="Scott C.E."/>
            <person name="Jones M.C."/>
            <person name="Ainscough R."/>
            <person name="Almeida J.P."/>
            <person name="Ambrose K.D."/>
            <person name="Ashwell R.I.S."/>
            <person name="Babbage A.K."/>
            <person name="Babbage S."/>
            <person name="Bagguley C.L."/>
            <person name="Bailey J."/>
            <person name="Banerjee R."/>
            <person name="Barker D.J."/>
            <person name="Barlow K.F."/>
            <person name="Bates K."/>
            <person name="Beasley H."/>
            <person name="Beasley O."/>
            <person name="Bird C.P."/>
            <person name="Bray-Allen S."/>
            <person name="Brown A.J."/>
            <person name="Brown J.Y."/>
            <person name="Burford D."/>
            <person name="Burrill W."/>
            <person name="Burton J."/>
            <person name="Carder C."/>
            <person name="Carter N.P."/>
            <person name="Chapman J.C."/>
            <person name="Chen Y."/>
            <person name="Clarke G."/>
            <person name="Clark S.Y."/>
            <person name="Clee C.M."/>
            <person name="Clegg S."/>
            <person name="Collier R.E."/>
            <person name="Corby N."/>
            <person name="Crosier M."/>
            <person name="Cummings A.T."/>
            <person name="Davies J."/>
            <person name="Dhami P."/>
            <person name="Dunn M."/>
            <person name="Dutta I."/>
            <person name="Dyer L.W."/>
            <person name="Earthrowl M.E."/>
            <person name="Faulkner L."/>
            <person name="Fleming C.J."/>
            <person name="Frankish A."/>
            <person name="Frankland J.A."/>
            <person name="French L."/>
            <person name="Fricker D.G."/>
            <person name="Garner P."/>
            <person name="Garnett J."/>
            <person name="Ghori J."/>
            <person name="Gilbert J.G.R."/>
            <person name="Glison C."/>
            <person name="Grafham D.V."/>
            <person name="Gribble S."/>
            <person name="Griffiths C."/>
            <person name="Griffiths-Jones S."/>
            <person name="Grocock R."/>
            <person name="Guy J."/>
            <person name="Hall R.E."/>
            <person name="Hammond S."/>
            <person name="Harley J.L."/>
            <person name="Harrison E.S.I."/>
            <person name="Hart E.A."/>
            <person name="Heath P.D."/>
            <person name="Henderson C.D."/>
            <person name="Hopkins B.L."/>
            <person name="Howard P.J."/>
            <person name="Howden P.J."/>
            <person name="Huckle E."/>
            <person name="Johnson C."/>
            <person name="Johnson D."/>
            <person name="Joy A.A."/>
            <person name="Kay M."/>
            <person name="Keenan S."/>
            <person name="Kershaw J.K."/>
            <person name="Kimberley A.M."/>
            <person name="King A."/>
            <person name="Knights A."/>
            <person name="Laird G.K."/>
            <person name="Langford C."/>
            <person name="Lawlor S."/>
            <person name="Leongamornlert D.A."/>
            <person name="Leversha M."/>
            <person name="Lloyd C."/>
            <person name="Lloyd D.M."/>
            <person name="Lovell J."/>
            <person name="Martin S."/>
            <person name="Mashreghi-Mohammadi M."/>
            <person name="Matthews L."/>
            <person name="McLaren S."/>
            <person name="McLay K.E."/>
            <person name="McMurray A."/>
            <person name="Milne S."/>
            <person name="Nickerson T."/>
            <person name="Nisbett J."/>
            <person name="Nordsiek G."/>
            <person name="Pearce A.V."/>
            <person name="Peck A.I."/>
            <person name="Porter K.M."/>
            <person name="Pandian R."/>
            <person name="Pelan S."/>
            <person name="Phillimore B."/>
            <person name="Povey S."/>
            <person name="Ramsey Y."/>
            <person name="Rand V."/>
            <person name="Scharfe M."/>
            <person name="Sehra H.K."/>
            <person name="Shownkeen R."/>
            <person name="Sims S.K."/>
            <person name="Skuce C.D."/>
            <person name="Smith M."/>
            <person name="Steward C.A."/>
            <person name="Swarbreck D."/>
            <person name="Sycamore N."/>
            <person name="Tester J."/>
            <person name="Thorpe A."/>
            <person name="Tracey A."/>
            <person name="Tromans A."/>
            <person name="Thomas D.W."/>
            <person name="Wall M."/>
            <person name="Wallis J.M."/>
            <person name="West A.P."/>
            <person name="Whitehead S.L."/>
            <person name="Willey D.L."/>
            <person name="Williams S.A."/>
            <person name="Wilming L."/>
            <person name="Wray P.W."/>
            <person name="Young L."/>
            <person name="Ashurst J.L."/>
            <person name="Coulson A."/>
            <person name="Blocker H."/>
            <person name="Durbin R.M."/>
            <person name="Sulston J.E."/>
            <person name="Hubbard T."/>
            <person name="Jackson M.J."/>
            <person name="Bentley D.R."/>
            <person name="Beck S."/>
            <person name="Rogers J."/>
            <person name="Dunham I."/>
        </authorList>
    </citation>
    <scope>NUCLEOTIDE SEQUENCE [LARGE SCALE GENOMIC DNA]</scope>
</reference>
<reference key="3">
    <citation type="submission" date="2005-09" db="EMBL/GenBank/DDBJ databases">
        <authorList>
            <person name="Mural R.J."/>
            <person name="Istrail S."/>
            <person name="Sutton G.G."/>
            <person name="Florea L."/>
            <person name="Halpern A.L."/>
            <person name="Mobarry C.M."/>
            <person name="Lippert R."/>
            <person name="Walenz B."/>
            <person name="Shatkay H."/>
            <person name="Dew I."/>
            <person name="Miller J.R."/>
            <person name="Flanigan M.J."/>
            <person name="Edwards N.J."/>
            <person name="Bolanos R."/>
            <person name="Fasulo D."/>
            <person name="Halldorsson B.V."/>
            <person name="Hannenhalli S."/>
            <person name="Turner R."/>
            <person name="Yooseph S."/>
            <person name="Lu F."/>
            <person name="Nusskern D.R."/>
            <person name="Shue B.C."/>
            <person name="Zheng X.H."/>
            <person name="Zhong F."/>
            <person name="Delcher A.L."/>
            <person name="Huson D.H."/>
            <person name="Kravitz S.A."/>
            <person name="Mouchard L."/>
            <person name="Reinert K."/>
            <person name="Remington K.A."/>
            <person name="Clark A.G."/>
            <person name="Waterman M.S."/>
            <person name="Eichler E.E."/>
            <person name="Adams M.D."/>
            <person name="Hunkapiller M.W."/>
            <person name="Myers E.W."/>
            <person name="Venter J.C."/>
        </authorList>
    </citation>
    <scope>NUCLEOTIDE SEQUENCE [LARGE SCALE GENOMIC DNA]</scope>
</reference>
<reference key="4">
    <citation type="journal article" date="2004" name="Genome Res.">
        <title>The status, quality, and expansion of the NIH full-length cDNA project: the Mammalian Gene Collection (MGC).</title>
        <authorList>
            <consortium name="The MGC Project Team"/>
        </authorList>
    </citation>
    <scope>NUCLEOTIDE SEQUENCE [LARGE SCALE MRNA] (ISOFORMS 1 AND 2)</scope>
    <scope>VARIANTS ARG-34 AND GLU-41</scope>
</reference>
<comment type="interaction">
    <interactant intactId="EBI-12006844">
        <id>A6H8Z2</id>
    </interactant>
    <interactant intactId="EBI-17183751">
        <id>X5D778</id>
        <label>ANKRD11</label>
    </interactant>
    <organismsDiffer>false</organismsDiffer>
    <experiments>3</experiments>
</comment>
<comment type="interaction">
    <interactant intactId="EBI-12006844">
        <id>A6H8Z2</id>
    </interactant>
    <interactant intactId="EBI-10961312">
        <id>Q8IYE1</id>
        <label>CCDC13</label>
    </interactant>
    <organismsDiffer>false</organismsDiffer>
    <experiments>3</experiments>
</comment>
<comment type="interaction">
    <interactant intactId="EBI-12006844">
        <id>A6H8Z2</id>
    </interactant>
    <interactant intactId="EBI-3867333">
        <id>A8MQ03</id>
        <label>CYSRT1</label>
    </interactant>
    <organismsDiffer>false</organismsDiffer>
    <experiments>3</experiments>
</comment>
<comment type="interaction">
    <interactant intactId="EBI-12006844">
        <id>A6H8Z2</id>
    </interactant>
    <interactant intactId="EBI-2349927">
        <id>Q5JST6</id>
        <label>EFHC2</label>
    </interactant>
    <organismsDiffer>false</organismsDiffer>
    <experiments>3</experiments>
</comment>
<comment type="interaction">
    <interactant intactId="EBI-12006844">
        <id>A6H8Z2</id>
    </interactant>
    <interactant intactId="EBI-19954058">
        <id>O15499</id>
        <label>GSC2</label>
    </interactant>
    <organismsDiffer>false</organismsDiffer>
    <experiments>3</experiments>
</comment>
<comment type="interaction">
    <interactant intactId="EBI-12006844">
        <id>A6H8Z2</id>
    </interactant>
    <interactant intactId="EBI-10981970">
        <id>Q5T749</id>
        <label>KPRP</label>
    </interactant>
    <organismsDiffer>false</organismsDiffer>
    <experiments>3</experiments>
</comment>
<comment type="interaction">
    <interactant intactId="EBI-12006844">
        <id>A6H8Z2</id>
    </interactant>
    <interactant intactId="EBI-1058674">
        <id>Q92764</id>
        <label>KRT35</label>
    </interactant>
    <organismsDiffer>false</organismsDiffer>
    <experiments>3</experiments>
</comment>
<comment type="interaction">
    <interactant intactId="EBI-12006844">
        <id>A6H8Z2</id>
    </interactant>
    <interactant intactId="EBI-10171774">
        <id>P60410</id>
        <label>KRTAP10-8</label>
    </interactant>
    <organismsDiffer>false</organismsDiffer>
    <experiments>3</experiments>
</comment>
<comment type="interaction">
    <interactant intactId="EBI-12006844">
        <id>A6H8Z2</id>
    </interactant>
    <interactant intactId="EBI-20141748">
        <id>P52954</id>
        <label>LBX1</label>
    </interactant>
    <organismsDiffer>false</organismsDiffer>
    <experiments>3</experiments>
</comment>
<comment type="interaction">
    <interactant intactId="EBI-12006844">
        <id>A6H8Z2</id>
    </interactant>
    <interactant intactId="EBI-11973993">
        <id>Q5TA81</id>
        <label>LCE2C</label>
    </interactant>
    <organismsDiffer>false</organismsDiffer>
    <experiments>3</experiments>
</comment>
<comment type="interaction">
    <interactant intactId="EBI-12006844">
        <id>A6H8Z2</id>
    </interactant>
    <interactant intactId="EBI-741037">
        <id>Q9BRK4</id>
        <label>LZTS2</label>
    </interactant>
    <organismsDiffer>false</organismsDiffer>
    <experiments>3</experiments>
</comment>
<comment type="interaction">
    <interactant intactId="EBI-12006844">
        <id>A6H8Z2</id>
    </interactant>
    <interactant intactId="EBI-3937430">
        <id>Q9NRY7</id>
        <label>PLSCR2</label>
    </interactant>
    <organismsDiffer>false</organismsDiffer>
    <experiments>3</experiments>
</comment>
<comment type="interaction">
    <interactant intactId="EBI-12006844">
        <id>A6H8Z2</id>
    </interactant>
    <interactant intactId="EBI-9867283">
        <id>Q86XT4</id>
        <label>TRIM50</label>
    </interactant>
    <organismsDiffer>false</organismsDiffer>
    <experiments>3</experiments>
</comment>
<comment type="interaction">
    <interactant intactId="EBI-25843965">
        <id>A6H8Z2-3</id>
    </interactant>
    <interactant intactId="EBI-10976677">
        <id>G5E9A7</id>
        <label>DMWD</label>
    </interactant>
    <organismsDiffer>false</organismsDiffer>
    <experiments>3</experiments>
</comment>
<comment type="interaction">
    <interactant intactId="EBI-25843965">
        <id>A6H8Z2-3</id>
    </interactant>
    <interactant intactId="EBI-351935">
        <id>P02545</id>
        <label>LMNA</label>
    </interactant>
    <organismsDiffer>false</organismsDiffer>
    <experiments>3</experiments>
</comment>
<comment type="interaction">
    <interactant intactId="EBI-25843965">
        <id>A6H8Z2-3</id>
    </interactant>
    <interactant intactId="EBI-5235340">
        <id>Q7Z699</id>
        <label>SPRED1</label>
    </interactant>
    <organismsDiffer>false</organismsDiffer>
    <experiments>3</experiments>
</comment>
<comment type="alternative products">
    <event type="alternative splicing"/>
    <isoform>
        <id>A6H8Z2-1</id>
        <name>1</name>
        <sequence type="displayed"/>
    </isoform>
    <isoform>
        <id>A6H8Z2-2</id>
        <name>2</name>
        <sequence type="described" ref="VSP_035486 VSP_035487"/>
    </isoform>
    <isoform>
        <id>A6H8Z2-3</id>
        <name>3</name>
        <sequence type="described" ref="VSP_036643 VSP_036644"/>
    </isoform>
</comment>
<comment type="similarity">
    <text evidence="5">Belongs to the FAM221 family.</text>
</comment>
<keyword id="KW-0025">Alternative splicing</keyword>
<keyword id="KW-1267">Proteomics identification</keyword>
<keyword id="KW-1185">Reference proteome</keyword>
<organism>
    <name type="scientific">Homo sapiens</name>
    <name type="common">Human</name>
    <dbReference type="NCBI Taxonomy" id="9606"/>
    <lineage>
        <taxon>Eukaryota</taxon>
        <taxon>Metazoa</taxon>
        <taxon>Chordata</taxon>
        <taxon>Craniata</taxon>
        <taxon>Vertebrata</taxon>
        <taxon>Euteleostomi</taxon>
        <taxon>Mammalia</taxon>
        <taxon>Eutheria</taxon>
        <taxon>Euarchontoglires</taxon>
        <taxon>Primates</taxon>
        <taxon>Haplorrhini</taxon>
        <taxon>Catarrhini</taxon>
        <taxon>Hominidae</taxon>
        <taxon>Homo</taxon>
    </lineage>
</organism>
<accession>A6H8Z2</accession>
<accession>Q5TCW2</accession>
<name>F221B_HUMAN</name>
<feature type="chain" id="PRO_0000309264" description="Protein FAM221B">
    <location>
        <begin position="1"/>
        <end position="402"/>
    </location>
</feature>
<feature type="region of interest" description="Disordered" evidence="1">
    <location>
        <begin position="1"/>
        <end position="205"/>
    </location>
</feature>
<feature type="region of interest" description="Disordered" evidence="1">
    <location>
        <begin position="378"/>
        <end position="402"/>
    </location>
</feature>
<feature type="compositionally biased region" description="Basic and acidic residues" evidence="1">
    <location>
        <begin position="1"/>
        <end position="35"/>
    </location>
</feature>
<feature type="compositionally biased region" description="Polar residues" evidence="1">
    <location>
        <begin position="77"/>
        <end position="90"/>
    </location>
</feature>
<feature type="compositionally biased region" description="Polar residues" evidence="1">
    <location>
        <begin position="393"/>
        <end position="402"/>
    </location>
</feature>
<feature type="splice variant" id="VSP_035486" description="In isoform 2." evidence="3">
    <location>
        <begin position="1"/>
        <end position="246"/>
    </location>
</feature>
<feature type="splice variant" id="VSP_035487" description="In isoform 2." evidence="3">
    <original>T</original>
    <variation>M</variation>
    <location>
        <position position="247"/>
    </location>
</feature>
<feature type="splice variant" id="VSP_036643" description="In isoform 3." evidence="4">
    <original>GLYIGWRCPHYLWDCFRIGDESRCFCGHLLREHRIISDISVPCKVSQCRCFMFCFIPSRPEEVGEFWLKRRATFDPKAWRAQCRCKHSHEEHA</original>
    <variation>DRIRNSSSGILAPAHLHCDCLYLALSTKPPWCKGALALQAISIKTEEAKPKATSRQALDPDRLWVSTLAGAAPITYGTVSGLGMSPDAFVDTC</variation>
    <location>
        <begin position="248"/>
        <end position="340"/>
    </location>
</feature>
<feature type="splice variant" id="VSP_036644" description="In isoform 3." evidence="4">
    <location>
        <begin position="341"/>
        <end position="402"/>
    </location>
</feature>
<feature type="sequence variant" id="VAR_061598" description="In dbSNP:rs13294256." evidence="2">
    <original>H</original>
    <variation>R</variation>
    <location>
        <position position="34"/>
    </location>
</feature>
<feature type="sequence variant" id="VAR_061599" description="In dbSNP:rs13294245." evidence="2">
    <original>K</original>
    <variation>E</variation>
    <location>
        <position position="41"/>
    </location>
</feature>
<protein>
    <recommendedName>
        <fullName>Protein FAM221B</fullName>
    </recommendedName>
</protein>
<proteinExistence type="evidence at protein level"/>
<evidence type="ECO:0000256" key="1">
    <source>
        <dbReference type="SAM" id="MobiDB-lite"/>
    </source>
</evidence>
<evidence type="ECO:0000269" key="2">
    <source>
    </source>
</evidence>
<evidence type="ECO:0000303" key="3">
    <source>
    </source>
</evidence>
<evidence type="ECO:0000303" key="4">
    <source>
    </source>
</evidence>
<evidence type="ECO:0000305" key="5"/>